<dbReference type="EMBL" id="CP000036">
    <property type="protein sequence ID" value="ABB66831.1"/>
    <property type="molecule type" value="Genomic_DNA"/>
</dbReference>
<dbReference type="RefSeq" id="WP_000847791.1">
    <property type="nucleotide sequence ID" value="NC_007613.1"/>
</dbReference>
<dbReference type="KEGG" id="sbo:SBO_2267"/>
<dbReference type="HOGENOM" id="CLU_073782_2_0_6"/>
<dbReference type="Proteomes" id="UP000007067">
    <property type="component" value="Chromosome"/>
</dbReference>
<dbReference type="HAMAP" id="MF_00789">
    <property type="entry name" value="UPF0319"/>
    <property type="match status" value="1"/>
</dbReference>
<dbReference type="InterPro" id="IPR018635">
    <property type="entry name" value="UPF0319"/>
</dbReference>
<dbReference type="NCBIfam" id="NF047712">
    <property type="entry name" value="CrliSynInhib"/>
    <property type="match status" value="1"/>
</dbReference>
<dbReference type="NCBIfam" id="NF002967">
    <property type="entry name" value="PRK03641.1"/>
    <property type="match status" value="1"/>
</dbReference>
<dbReference type="PANTHER" id="PTHR38108">
    <property type="entry name" value="UPF0319 PROTEIN YCCT"/>
    <property type="match status" value="1"/>
</dbReference>
<dbReference type="PANTHER" id="PTHR38108:SF1">
    <property type="entry name" value="UPF0319 PROTEIN YCCT"/>
    <property type="match status" value="1"/>
</dbReference>
<dbReference type="Pfam" id="PF09829">
    <property type="entry name" value="DUF2057"/>
    <property type="match status" value="1"/>
</dbReference>
<protein>
    <recommendedName>
        <fullName evidence="1">UPF0319 protein YccT</fullName>
    </recommendedName>
</protein>
<comment type="similarity">
    <text evidence="1">Belongs to the UPF0319 family.</text>
</comment>
<accession>Q31YM7</accession>
<evidence type="ECO:0000255" key="1">
    <source>
        <dbReference type="HAMAP-Rule" id="MF_00789"/>
    </source>
</evidence>
<feature type="signal peptide" evidence="1">
    <location>
        <begin position="1"/>
        <end position="20"/>
    </location>
</feature>
<feature type="chain" id="PRO_1000046907" description="UPF0319 protein YccT">
    <location>
        <begin position="21"/>
        <end position="220"/>
    </location>
</feature>
<gene>
    <name evidence="1" type="primary">yccT</name>
    <name type="ordered locus">SBO_2267</name>
</gene>
<organism>
    <name type="scientific">Shigella boydii serotype 4 (strain Sb227)</name>
    <dbReference type="NCBI Taxonomy" id="300268"/>
    <lineage>
        <taxon>Bacteria</taxon>
        <taxon>Pseudomonadati</taxon>
        <taxon>Pseudomonadota</taxon>
        <taxon>Gammaproteobacteria</taxon>
        <taxon>Enterobacterales</taxon>
        <taxon>Enterobacteriaceae</taxon>
        <taxon>Shigella</taxon>
    </lineage>
</organism>
<proteinExistence type="inferred from homology"/>
<keyword id="KW-0732">Signal</keyword>
<reference key="1">
    <citation type="journal article" date="2005" name="Nucleic Acids Res.">
        <title>Genome dynamics and diversity of Shigella species, the etiologic agents of bacillary dysentery.</title>
        <authorList>
            <person name="Yang F."/>
            <person name="Yang J."/>
            <person name="Zhang X."/>
            <person name="Chen L."/>
            <person name="Jiang Y."/>
            <person name="Yan Y."/>
            <person name="Tang X."/>
            <person name="Wang J."/>
            <person name="Xiong Z."/>
            <person name="Dong J."/>
            <person name="Xue Y."/>
            <person name="Zhu Y."/>
            <person name="Xu X."/>
            <person name="Sun L."/>
            <person name="Chen S."/>
            <person name="Nie H."/>
            <person name="Peng J."/>
            <person name="Xu J."/>
            <person name="Wang Y."/>
            <person name="Yuan Z."/>
            <person name="Wen Y."/>
            <person name="Yao Z."/>
            <person name="Shen Y."/>
            <person name="Qiang B."/>
            <person name="Hou Y."/>
            <person name="Yu J."/>
            <person name="Jin Q."/>
        </authorList>
    </citation>
    <scope>NUCLEOTIDE SEQUENCE [LARGE SCALE GENOMIC DNA]</scope>
    <source>
        <strain>Sb227</strain>
    </source>
</reference>
<sequence length="220" mass="24594">MKTGIVTTLIALCLPVSVFATTLRLSTDVDLLVLDGKKVSSSLLRGADSIELDNGPHQLVFRVEKTIHLSNSEERLYISPPLVVSFNTQLINQVNFRLPRLENEREANHFDAAPRLELLDGDATPIPVKLDILAITSTAKTIDYEVEVERYNKSAKRASLPQFATMMADDSTLLSGVSELDAIPPQSQVLTEQRLKYWFKLADPQTRNTFLQWAEKQPSS</sequence>
<name>YCCT_SHIBS</name>